<gene>
    <name type="ordered locus">BB_0129</name>
</gene>
<keyword id="KW-0413">Isomerase</keyword>
<keyword id="KW-1185">Reference proteome</keyword>
<keyword id="KW-0694">RNA-binding</keyword>
<organism>
    <name type="scientific">Borreliella burgdorferi (strain ATCC 35210 / DSM 4680 / CIP 102532 / B31)</name>
    <name type="common">Borrelia burgdorferi</name>
    <dbReference type="NCBI Taxonomy" id="224326"/>
    <lineage>
        <taxon>Bacteria</taxon>
        <taxon>Pseudomonadati</taxon>
        <taxon>Spirochaetota</taxon>
        <taxon>Spirochaetia</taxon>
        <taxon>Spirochaetales</taxon>
        <taxon>Borreliaceae</taxon>
        <taxon>Borreliella</taxon>
    </lineage>
</organism>
<feature type="chain" id="PRO_0000100025" description="Uncharacterized RNA pseudouridine synthase BB_0129">
    <location>
        <begin position="1"/>
        <end position="249"/>
    </location>
</feature>
<feature type="domain" description="S4 RNA-binding" evidence="2">
    <location>
        <begin position="7"/>
        <end position="64"/>
    </location>
</feature>
<feature type="active site" description="Nucleophile" evidence="1">
    <location>
        <position position="112"/>
    </location>
</feature>
<dbReference type="EC" id="5.4.99.-"/>
<dbReference type="EMBL" id="AE000783">
    <property type="protein sequence ID" value="AAC66508.1"/>
    <property type="molecule type" value="Genomic_DNA"/>
</dbReference>
<dbReference type="PIR" id="A70116">
    <property type="entry name" value="A70116"/>
</dbReference>
<dbReference type="RefSeq" id="NP_212263.1">
    <property type="nucleotide sequence ID" value="NC_001318.1"/>
</dbReference>
<dbReference type="RefSeq" id="WP_002556731.1">
    <property type="nucleotide sequence ID" value="NC_001318.1"/>
</dbReference>
<dbReference type="SMR" id="O51155"/>
<dbReference type="STRING" id="224326.BB_0129"/>
<dbReference type="PaxDb" id="224326-BB_0129"/>
<dbReference type="EnsemblBacteria" id="AAC66508">
    <property type="protein sequence ID" value="AAC66508"/>
    <property type="gene ID" value="BB_0129"/>
</dbReference>
<dbReference type="KEGG" id="bbu:BB_0129"/>
<dbReference type="PATRIC" id="fig|224326.49.peg.527"/>
<dbReference type="HOGENOM" id="CLU_024979_1_2_12"/>
<dbReference type="OrthoDB" id="9807213at2"/>
<dbReference type="Proteomes" id="UP000001807">
    <property type="component" value="Chromosome"/>
</dbReference>
<dbReference type="GO" id="GO:0003723">
    <property type="term" value="F:RNA binding"/>
    <property type="evidence" value="ECO:0007669"/>
    <property type="project" value="UniProtKB-KW"/>
</dbReference>
<dbReference type="GO" id="GO:0120159">
    <property type="term" value="F:rRNA pseudouridine synthase activity"/>
    <property type="evidence" value="ECO:0007669"/>
    <property type="project" value="UniProtKB-ARBA"/>
</dbReference>
<dbReference type="GO" id="GO:0000455">
    <property type="term" value="P:enzyme-directed rRNA pseudouridine synthesis"/>
    <property type="evidence" value="ECO:0007669"/>
    <property type="project" value="UniProtKB-ARBA"/>
</dbReference>
<dbReference type="CDD" id="cd00165">
    <property type="entry name" value="S4"/>
    <property type="match status" value="1"/>
</dbReference>
<dbReference type="Gene3D" id="3.30.70.1560">
    <property type="entry name" value="Alpha-L RNA-binding motif"/>
    <property type="match status" value="1"/>
</dbReference>
<dbReference type="Gene3D" id="3.30.70.580">
    <property type="entry name" value="Pseudouridine synthase I, catalytic domain, N-terminal subdomain"/>
    <property type="match status" value="1"/>
</dbReference>
<dbReference type="Gene3D" id="3.10.290.10">
    <property type="entry name" value="RNA-binding S4 domain"/>
    <property type="match status" value="1"/>
</dbReference>
<dbReference type="InterPro" id="IPR042092">
    <property type="entry name" value="PsdUridine_s_RsuA/RluB/E/F_cat"/>
</dbReference>
<dbReference type="InterPro" id="IPR020103">
    <property type="entry name" value="PsdUridine_synth_cat_dom_sf"/>
</dbReference>
<dbReference type="InterPro" id="IPR006145">
    <property type="entry name" value="PsdUridine_synth_RsuA/RluA"/>
</dbReference>
<dbReference type="InterPro" id="IPR000748">
    <property type="entry name" value="PsdUridine_synth_RsuA/RluB/E/F"/>
</dbReference>
<dbReference type="InterPro" id="IPR018496">
    <property type="entry name" value="PsdUridine_synth_RsuA/RluB_CS"/>
</dbReference>
<dbReference type="InterPro" id="IPR050343">
    <property type="entry name" value="RsuA_PseudoU_synthase"/>
</dbReference>
<dbReference type="InterPro" id="IPR002942">
    <property type="entry name" value="S4_RNA-bd"/>
</dbReference>
<dbReference type="InterPro" id="IPR036986">
    <property type="entry name" value="S4_RNA-bd_sf"/>
</dbReference>
<dbReference type="InterPro" id="IPR020094">
    <property type="entry name" value="TruA/RsuA/RluB/E/F_N"/>
</dbReference>
<dbReference type="NCBIfam" id="TIGR00093">
    <property type="entry name" value="pseudouridine synthase"/>
    <property type="match status" value="1"/>
</dbReference>
<dbReference type="PANTHER" id="PTHR47683">
    <property type="entry name" value="PSEUDOURIDINE SYNTHASE FAMILY PROTEIN-RELATED"/>
    <property type="match status" value="1"/>
</dbReference>
<dbReference type="PANTHER" id="PTHR47683:SF2">
    <property type="entry name" value="RNA-BINDING S4 DOMAIN-CONTAINING PROTEIN"/>
    <property type="match status" value="1"/>
</dbReference>
<dbReference type="Pfam" id="PF00849">
    <property type="entry name" value="PseudoU_synth_2"/>
    <property type="match status" value="1"/>
</dbReference>
<dbReference type="Pfam" id="PF01479">
    <property type="entry name" value="S4"/>
    <property type="match status" value="1"/>
</dbReference>
<dbReference type="SMART" id="SM00363">
    <property type="entry name" value="S4"/>
    <property type="match status" value="1"/>
</dbReference>
<dbReference type="SUPFAM" id="SSF55174">
    <property type="entry name" value="Alpha-L RNA-binding motif"/>
    <property type="match status" value="1"/>
</dbReference>
<dbReference type="SUPFAM" id="SSF55120">
    <property type="entry name" value="Pseudouridine synthase"/>
    <property type="match status" value="1"/>
</dbReference>
<dbReference type="PROSITE" id="PS01149">
    <property type="entry name" value="PSI_RSU"/>
    <property type="match status" value="1"/>
</dbReference>
<dbReference type="PROSITE" id="PS50889">
    <property type="entry name" value="S4"/>
    <property type="match status" value="1"/>
</dbReference>
<comment type="catalytic activity">
    <reaction>
        <text>a uridine in RNA = a pseudouridine in RNA</text>
        <dbReference type="Rhea" id="RHEA:48348"/>
        <dbReference type="Rhea" id="RHEA-COMP:12068"/>
        <dbReference type="Rhea" id="RHEA-COMP:12069"/>
        <dbReference type="ChEBI" id="CHEBI:65314"/>
        <dbReference type="ChEBI" id="CHEBI:65315"/>
    </reaction>
</comment>
<comment type="similarity">
    <text evidence="3">Belongs to the pseudouridine synthase RsuA family.</text>
</comment>
<reference key="1">
    <citation type="journal article" date="1997" name="Nature">
        <title>Genomic sequence of a Lyme disease spirochaete, Borrelia burgdorferi.</title>
        <authorList>
            <person name="Fraser C.M."/>
            <person name="Casjens S."/>
            <person name="Huang W.M."/>
            <person name="Sutton G.G."/>
            <person name="Clayton R.A."/>
            <person name="Lathigra R."/>
            <person name="White O."/>
            <person name="Ketchum K.A."/>
            <person name="Dodson R.J."/>
            <person name="Hickey E.K."/>
            <person name="Gwinn M.L."/>
            <person name="Dougherty B.A."/>
            <person name="Tomb J.-F."/>
            <person name="Fleischmann R.D."/>
            <person name="Richardson D.L."/>
            <person name="Peterson J.D."/>
            <person name="Kerlavage A.R."/>
            <person name="Quackenbush J."/>
            <person name="Salzberg S.L."/>
            <person name="Hanson M."/>
            <person name="van Vugt R."/>
            <person name="Palmer N."/>
            <person name="Adams M.D."/>
            <person name="Gocayne J.D."/>
            <person name="Weidman J.F."/>
            <person name="Utterback T.R."/>
            <person name="Watthey L."/>
            <person name="McDonald L.A."/>
            <person name="Artiach P."/>
            <person name="Bowman C."/>
            <person name="Garland S.A."/>
            <person name="Fujii C."/>
            <person name="Cotton M.D."/>
            <person name="Horst K."/>
            <person name="Roberts K.M."/>
            <person name="Hatch B."/>
            <person name="Smith H.O."/>
            <person name="Venter J.C."/>
        </authorList>
    </citation>
    <scope>NUCLEOTIDE SEQUENCE [LARGE SCALE GENOMIC DNA]</scope>
    <source>
        <strain>ATCC 35210 / DSM 4680 / CIP 102532 / B31</strain>
    </source>
</reference>
<proteinExistence type="inferred from homology"/>
<name>Y129_BORBU</name>
<protein>
    <recommendedName>
        <fullName>Uncharacterized RNA pseudouridine synthase BB_0129</fullName>
        <ecNumber>5.4.99.-</ecNumber>
    </recommendedName>
    <alternativeName>
        <fullName>RNA pseudouridylate synthase</fullName>
    </alternativeName>
    <alternativeName>
        <fullName>RNA-uridine isomerase</fullName>
    </alternativeName>
</protein>
<accession>O51155</accession>
<evidence type="ECO:0000250" key="1"/>
<evidence type="ECO:0000255" key="2">
    <source>
        <dbReference type="PROSITE-ProRule" id="PRU00182"/>
    </source>
</evidence>
<evidence type="ECO:0000305" key="3"/>
<sequence>MIALKAPRVHVFLAEKGVGSRRFCEELIRKKLVRVNNTIAKLGDKVTLGDRIIYKKQIFVFKDFQINNRIYLALNKPRNYLCSNFDVDGRKLAISLVQPLFKERVFSIGRLDFKSSGLLLFTNDGKFANDIIHPRQKVEREYIIESKKDIDENLLISFKSGIKVKKEFFKLKSYEILNKNSARLILDEGKNREIRKVFLSKNIFLKKIHRIRIGNINLDSLKEGQVKIVPLSKINSLKSRLEKLNDNSN</sequence>